<dbReference type="SMR" id="P0C613"/>
<dbReference type="ConoServer" id="2803">
    <property type="toxin name" value="M11.2"/>
</dbReference>
<dbReference type="GO" id="GO:0005576">
    <property type="term" value="C:extracellular region"/>
    <property type="evidence" value="ECO:0007669"/>
    <property type="project" value="UniProtKB-SubCell"/>
</dbReference>
<dbReference type="GO" id="GO:0099106">
    <property type="term" value="F:ion channel regulator activity"/>
    <property type="evidence" value="ECO:0007669"/>
    <property type="project" value="UniProtKB-KW"/>
</dbReference>
<dbReference type="GO" id="GO:0090729">
    <property type="term" value="F:toxin activity"/>
    <property type="evidence" value="ECO:0007669"/>
    <property type="project" value="UniProtKB-KW"/>
</dbReference>
<dbReference type="InterPro" id="IPR013141">
    <property type="entry name" value="Conotoxin-I_CS"/>
</dbReference>
<dbReference type="PROSITE" id="PS60019">
    <property type="entry name" value="I_CONOTOXIN"/>
    <property type="match status" value="1"/>
</dbReference>
<feature type="peptide" id="PRO_0000314089" description="Conotoxin M11.2">
    <location>
        <begin position="1"/>
        <end position="35"/>
    </location>
</feature>
<feature type="disulfide bond" evidence="2">
    <location>
        <begin position="2"/>
        <end position="16"/>
    </location>
</feature>
<feature type="disulfide bond" evidence="2">
    <location>
        <begin position="9"/>
        <end position="21"/>
    </location>
</feature>
<feature type="disulfide bond" evidence="2">
    <location>
        <begin position="15"/>
        <end position="26"/>
    </location>
</feature>
<feature type="disulfide bond" evidence="2">
    <location>
        <begin position="20"/>
        <end position="33"/>
    </location>
</feature>
<keyword id="KW-1015">Disulfide bond</keyword>
<keyword id="KW-0872">Ion channel impairing toxin</keyword>
<keyword id="KW-0528">Neurotoxin</keyword>
<keyword id="KW-0964">Secreted</keyword>
<keyword id="KW-0800">Toxin</keyword>
<organism>
    <name type="scientific">Conus magus</name>
    <name type="common">Magical cone</name>
    <dbReference type="NCBI Taxonomy" id="6492"/>
    <lineage>
        <taxon>Eukaryota</taxon>
        <taxon>Metazoa</taxon>
        <taxon>Spiralia</taxon>
        <taxon>Lophotrochozoa</taxon>
        <taxon>Mollusca</taxon>
        <taxon>Gastropoda</taxon>
        <taxon>Caenogastropoda</taxon>
        <taxon>Neogastropoda</taxon>
        <taxon>Conoidea</taxon>
        <taxon>Conidae</taxon>
        <taxon>Conus</taxon>
        <taxon>Pionoconus</taxon>
    </lineage>
</organism>
<proteinExistence type="evidence at transcript level"/>
<protein>
    <recommendedName>
        <fullName>Conotoxin M11.2</fullName>
    </recommendedName>
</protein>
<evidence type="ECO:0000250" key="1"/>
<evidence type="ECO:0000250" key="2">
    <source>
        <dbReference type="UniProtKB" id="Q7Z094"/>
    </source>
</evidence>
<evidence type="ECO:0000305" key="3"/>
<accession>P0C613</accession>
<comment type="subcellular location">
    <subcellularLocation>
        <location evidence="1">Secreted</location>
    </subcellularLocation>
</comment>
<comment type="tissue specificity">
    <text>Expressed by the venom duct.</text>
</comment>
<comment type="domain">
    <text>The cysteine framework is XI (C-C-CC-CC-C-C).</text>
</comment>
<comment type="similarity">
    <text evidence="3">Belongs to the conotoxin I1 superfamily.</text>
</comment>
<reference key="1">
    <citation type="journal article" date="2008" name="Toxicon">
        <title>I(1)-superfamily conotoxins and prediction of single D-amino acid occurrence.</title>
        <authorList>
            <person name="Buczek O."/>
            <person name="Jimenez E.C."/>
            <person name="Yoshikami D."/>
            <person name="Imperial J.S."/>
            <person name="Watkins M."/>
            <person name="Morrison A."/>
            <person name="Olivera B.M."/>
        </authorList>
    </citation>
    <scope>NUCLEOTIDE SEQUENCE [MRNA]</scope>
    <source>
        <tissue>Venom duct</tissue>
    </source>
</reference>
<sequence>TCSNKGQQCGDDSDCCWHLCCVNNKCAHLILLCNL</sequence>
<name>I1B2_CONMA</name>